<proteinExistence type="inferred from homology"/>
<organism>
    <name type="scientific">Burkholderia lata (strain ATCC 17760 / DSM 23089 / LMG 22485 / NCIMB 9086 / R18194 / 383)</name>
    <dbReference type="NCBI Taxonomy" id="482957"/>
    <lineage>
        <taxon>Bacteria</taxon>
        <taxon>Pseudomonadati</taxon>
        <taxon>Pseudomonadota</taxon>
        <taxon>Betaproteobacteria</taxon>
        <taxon>Burkholderiales</taxon>
        <taxon>Burkholderiaceae</taxon>
        <taxon>Burkholderia</taxon>
        <taxon>Burkholderia cepacia complex</taxon>
    </lineage>
</organism>
<accession>Q39DN7</accession>
<feature type="chain" id="PRO_1000115118" description="Large ribosomal subunit protein bL33">
    <location>
        <begin position="1"/>
        <end position="55"/>
    </location>
</feature>
<keyword id="KW-0687">Ribonucleoprotein</keyword>
<keyword id="KW-0689">Ribosomal protein</keyword>
<protein>
    <recommendedName>
        <fullName evidence="1">Large ribosomal subunit protein bL33</fullName>
    </recommendedName>
    <alternativeName>
        <fullName evidence="2">50S ribosomal protein L33</fullName>
    </alternativeName>
</protein>
<sequence length="55" mass="6382">MAKGARDKIKLESTAGTGHFYTTTKNKRNMPEKMAIKKFDPVVRKHVEYKETKIK</sequence>
<name>RL33_BURL3</name>
<reference key="1">
    <citation type="submission" date="2005-10" db="EMBL/GenBank/DDBJ databases">
        <title>Complete sequence of chromosome 1 of Burkholderia sp. 383.</title>
        <authorList>
            <consortium name="US DOE Joint Genome Institute"/>
            <person name="Copeland A."/>
            <person name="Lucas S."/>
            <person name="Lapidus A."/>
            <person name="Barry K."/>
            <person name="Detter J.C."/>
            <person name="Glavina T."/>
            <person name="Hammon N."/>
            <person name="Israni S."/>
            <person name="Pitluck S."/>
            <person name="Chain P."/>
            <person name="Malfatti S."/>
            <person name="Shin M."/>
            <person name="Vergez L."/>
            <person name="Schmutz J."/>
            <person name="Larimer F."/>
            <person name="Land M."/>
            <person name="Kyrpides N."/>
            <person name="Lykidis A."/>
            <person name="Richardson P."/>
        </authorList>
    </citation>
    <scope>NUCLEOTIDE SEQUENCE [LARGE SCALE GENOMIC DNA]</scope>
    <source>
        <strain>ATCC 17760 / DSM 23089 / LMG 22485 / NCIMB 9086 / R18194 / 383</strain>
    </source>
</reference>
<gene>
    <name evidence="1" type="primary">rpmG</name>
    <name type="ordered locus">Bcep18194_A5835</name>
</gene>
<dbReference type="EMBL" id="CP000151">
    <property type="protein sequence ID" value="ABB09429.1"/>
    <property type="molecule type" value="Genomic_DNA"/>
</dbReference>
<dbReference type="RefSeq" id="WP_006478046.1">
    <property type="nucleotide sequence ID" value="NZ_WNDV01000008.1"/>
</dbReference>
<dbReference type="SMR" id="Q39DN7"/>
<dbReference type="GeneID" id="98107655"/>
<dbReference type="KEGG" id="bur:Bcep18194_A5835"/>
<dbReference type="HOGENOM" id="CLU_190949_1_1_4"/>
<dbReference type="Proteomes" id="UP000002705">
    <property type="component" value="Chromosome 1"/>
</dbReference>
<dbReference type="GO" id="GO:0022625">
    <property type="term" value="C:cytosolic large ribosomal subunit"/>
    <property type="evidence" value="ECO:0007669"/>
    <property type="project" value="TreeGrafter"/>
</dbReference>
<dbReference type="GO" id="GO:0003735">
    <property type="term" value="F:structural constituent of ribosome"/>
    <property type="evidence" value="ECO:0007669"/>
    <property type="project" value="InterPro"/>
</dbReference>
<dbReference type="GO" id="GO:0006412">
    <property type="term" value="P:translation"/>
    <property type="evidence" value="ECO:0007669"/>
    <property type="project" value="UniProtKB-UniRule"/>
</dbReference>
<dbReference type="FunFam" id="2.20.28.120:FF:000001">
    <property type="entry name" value="50S ribosomal protein L33"/>
    <property type="match status" value="1"/>
</dbReference>
<dbReference type="Gene3D" id="2.20.28.120">
    <property type="entry name" value="Ribosomal protein L33"/>
    <property type="match status" value="1"/>
</dbReference>
<dbReference type="HAMAP" id="MF_00294">
    <property type="entry name" value="Ribosomal_bL33"/>
    <property type="match status" value="1"/>
</dbReference>
<dbReference type="InterPro" id="IPR001705">
    <property type="entry name" value="Ribosomal_bL33"/>
</dbReference>
<dbReference type="InterPro" id="IPR018264">
    <property type="entry name" value="Ribosomal_bL33_CS"/>
</dbReference>
<dbReference type="InterPro" id="IPR038584">
    <property type="entry name" value="Ribosomal_bL33_sf"/>
</dbReference>
<dbReference type="InterPro" id="IPR011332">
    <property type="entry name" value="Ribosomal_zn-bd"/>
</dbReference>
<dbReference type="NCBIfam" id="NF001860">
    <property type="entry name" value="PRK00595.1"/>
    <property type="match status" value="1"/>
</dbReference>
<dbReference type="NCBIfam" id="TIGR01023">
    <property type="entry name" value="rpmG_bact"/>
    <property type="match status" value="1"/>
</dbReference>
<dbReference type="PANTHER" id="PTHR15238">
    <property type="entry name" value="54S RIBOSOMAL PROTEIN L39, MITOCHONDRIAL"/>
    <property type="match status" value="1"/>
</dbReference>
<dbReference type="PANTHER" id="PTHR15238:SF1">
    <property type="entry name" value="LARGE RIBOSOMAL SUBUNIT PROTEIN BL33M"/>
    <property type="match status" value="1"/>
</dbReference>
<dbReference type="Pfam" id="PF00471">
    <property type="entry name" value="Ribosomal_L33"/>
    <property type="match status" value="1"/>
</dbReference>
<dbReference type="SUPFAM" id="SSF57829">
    <property type="entry name" value="Zn-binding ribosomal proteins"/>
    <property type="match status" value="1"/>
</dbReference>
<dbReference type="PROSITE" id="PS00582">
    <property type="entry name" value="RIBOSOMAL_L33"/>
    <property type="match status" value="1"/>
</dbReference>
<evidence type="ECO:0000255" key="1">
    <source>
        <dbReference type="HAMAP-Rule" id="MF_00294"/>
    </source>
</evidence>
<evidence type="ECO:0000305" key="2"/>
<comment type="similarity">
    <text evidence="1">Belongs to the bacterial ribosomal protein bL33 family.</text>
</comment>